<feature type="signal peptide">
    <location>
        <begin position="1"/>
        <end position="17"/>
    </location>
</feature>
<feature type="chain" id="PRO_0000018199" description="15 kDa lipoprotein">
    <location>
        <begin position="18"/>
        <end position="141"/>
    </location>
</feature>
<feature type="lipid moiety-binding region" description="N-palmitoyl cysteine" evidence="1">
    <location>
        <position position="18"/>
    </location>
</feature>
<feature type="lipid moiety-binding region" description="S-diacylglycerol cysteine" evidence="1">
    <location>
        <position position="18"/>
    </location>
</feature>
<feature type="sequence conflict" description="In Ref. 3." evidence="1" ref="3">
    <original>R</original>
    <variation>GA</variation>
    <location>
        <position position="6"/>
    </location>
</feature>
<feature type="sequence conflict" description="In Ref. 3; AAC65160." evidence="1" ref="3">
    <original>R</original>
    <variation>A</variation>
    <location>
        <position position="124"/>
    </location>
</feature>
<keyword id="KW-1003">Cell membrane</keyword>
<keyword id="KW-0449">Lipoprotein</keyword>
<keyword id="KW-0472">Membrane</keyword>
<keyword id="KW-0564">Palmitate</keyword>
<keyword id="KW-1185">Reference proteome</keyword>
<keyword id="KW-0732">Signal</keyword>
<accession>P16055</accession>
<accession>O83201</accession>
<name>TA15_TREPA</name>
<proteinExistence type="predicted"/>
<gene>
    <name type="primary">tpp15</name>
    <name type="ordered locus">TP_0171</name>
</gene>
<organism>
    <name type="scientific">Treponema pallidum (strain Nichols)</name>
    <dbReference type="NCBI Taxonomy" id="243276"/>
    <lineage>
        <taxon>Bacteria</taxon>
        <taxon>Pseudomonadati</taxon>
        <taxon>Spirochaetota</taxon>
        <taxon>Spirochaetia</taxon>
        <taxon>Spirochaetales</taxon>
        <taxon>Treponemataceae</taxon>
        <taxon>Treponema</taxon>
    </lineage>
</organism>
<comment type="subcellular location">
    <subcellularLocation>
        <location evidence="1">Cell membrane</location>
        <topology evidence="1">Lipid-anchor</topology>
    </subcellularLocation>
</comment>
<protein>
    <recommendedName>
        <fullName>15 kDa lipoprotein</fullName>
    </recommendedName>
    <alternativeName>
        <fullName>Major membrane immunogen</fullName>
    </alternativeName>
</protein>
<sequence>MVKRGRFALCLAVLLGACSFSSIPNGTYRATYQDFDENGWKDFLEVTFDGGKMVQVVYDYQHKEGRFKSQDADYHRVMYASSGIGPEKAFRELADALLEKGNPEMVDVVTGATVSSQSFRRLGRALLQSARRGEKEAIISR</sequence>
<reference key="1">
    <citation type="journal article" date="1990" name="Mol. Microbiol.">
        <title>Lipid modification of the 15 kilodalton major membrane immunogen of Treponema pallidum.</title>
        <authorList>
            <person name="Purcell B.K."/>
            <person name="Radolf J.D."/>
        </authorList>
    </citation>
    <scope>NUCLEOTIDE SEQUENCE [GENOMIC DNA]</scope>
</reference>
<reference key="2">
    <citation type="journal article" date="1997" name="Gene">
        <title>Identification and transcriptional analysis of a Treponema pallidum operon encoding a putative ABC transport system, an iron-activated repressor protein homolog, and a glycolytic pathway enzyme homolog.</title>
        <authorList>
            <person name="Hardham J.M."/>
            <person name="Stamm L.V."/>
            <person name="Porcella S.F."/>
            <person name="Frye J.G."/>
            <person name="Barnes N.Y."/>
            <person name="Howell J.K."/>
            <person name="Mueller S.L."/>
            <person name="Radolf J.D."/>
            <person name="Weinstock G.M."/>
            <person name="Norris S.J."/>
        </authorList>
    </citation>
    <scope>NUCLEOTIDE SEQUENCE [GENOMIC DNA]</scope>
</reference>
<reference key="3">
    <citation type="journal article" date="1998" name="Science">
        <title>Complete genome sequence of Treponema pallidum, the syphilis spirochete.</title>
        <authorList>
            <person name="Fraser C.M."/>
            <person name="Norris S.J."/>
            <person name="Weinstock G.M."/>
            <person name="White O."/>
            <person name="Sutton G.G."/>
            <person name="Dodson R.J."/>
            <person name="Gwinn M.L."/>
            <person name="Hickey E.K."/>
            <person name="Clayton R.A."/>
            <person name="Ketchum K.A."/>
            <person name="Sodergren E."/>
            <person name="Hardham J.M."/>
            <person name="McLeod M.P."/>
            <person name="Salzberg S.L."/>
            <person name="Peterson J.D."/>
            <person name="Khalak H.G."/>
            <person name="Richardson D.L."/>
            <person name="Howell J.K."/>
            <person name="Chidambaram M."/>
            <person name="Utterback T.R."/>
            <person name="McDonald L.A."/>
            <person name="Artiach P."/>
            <person name="Bowman C."/>
            <person name="Cotton M.D."/>
            <person name="Fujii C."/>
            <person name="Garland S.A."/>
            <person name="Hatch B."/>
            <person name="Horst K."/>
            <person name="Roberts K.M."/>
            <person name="Sandusky M."/>
            <person name="Weidman J.F."/>
            <person name="Smith H.O."/>
            <person name="Venter J.C."/>
        </authorList>
    </citation>
    <scope>NUCLEOTIDE SEQUENCE [LARGE SCALE GENOMIC DNA]</scope>
    <source>
        <strain>Nichols</strain>
    </source>
</reference>
<dbReference type="EMBL" id="U55214">
    <property type="protein sequence ID" value="AAC45732.1"/>
    <property type="molecule type" value="Genomic_DNA"/>
</dbReference>
<dbReference type="EMBL" id="AE000520">
    <property type="protein sequence ID" value="AAC65160.1"/>
    <property type="molecule type" value="Genomic_DNA"/>
</dbReference>
<dbReference type="SMR" id="P16055"/>
<dbReference type="IntAct" id="P16055">
    <property type="interactions" value="17"/>
</dbReference>
<dbReference type="STRING" id="243276.TP_0171"/>
<dbReference type="EnsemblBacteria" id="AAC65160">
    <property type="protein sequence ID" value="AAC65160"/>
    <property type="gene ID" value="TP_0171"/>
</dbReference>
<dbReference type="KEGG" id="tpa:TP_0171"/>
<dbReference type="eggNOG" id="COG4939">
    <property type="taxonomic scope" value="Bacteria"/>
</dbReference>
<dbReference type="HOGENOM" id="CLU_119924_1_0_12"/>
<dbReference type="Proteomes" id="UP000000811">
    <property type="component" value="Chromosome"/>
</dbReference>
<dbReference type="GO" id="GO:0005886">
    <property type="term" value="C:plasma membrane"/>
    <property type="evidence" value="ECO:0007669"/>
    <property type="project" value="UniProtKB-SubCell"/>
</dbReference>
<dbReference type="GO" id="GO:0010181">
    <property type="term" value="F:FMN binding"/>
    <property type="evidence" value="ECO:0007669"/>
    <property type="project" value="InterPro"/>
</dbReference>
<dbReference type="Gene3D" id="3.90.1010.20">
    <property type="match status" value="1"/>
</dbReference>
<dbReference type="InterPro" id="IPR007329">
    <property type="entry name" value="FMN-bd"/>
</dbReference>
<dbReference type="InterPro" id="IPR017058">
    <property type="entry name" value="Major_M_immunogen_Tpp15_prd"/>
</dbReference>
<dbReference type="Pfam" id="PF04205">
    <property type="entry name" value="FMN_bind"/>
    <property type="match status" value="1"/>
</dbReference>
<dbReference type="PIRSF" id="PIRSF036531">
    <property type="entry name" value="Tpp15_prd"/>
    <property type="match status" value="1"/>
</dbReference>
<dbReference type="SMART" id="SM00900">
    <property type="entry name" value="FMN_bind"/>
    <property type="match status" value="1"/>
</dbReference>
<dbReference type="PROSITE" id="PS51257">
    <property type="entry name" value="PROKAR_LIPOPROTEIN"/>
    <property type="match status" value="1"/>
</dbReference>
<evidence type="ECO:0000305" key="1"/>